<dbReference type="EC" id="2.5.1.141" evidence="1"/>
<dbReference type="EMBL" id="BA000021">
    <property type="protein sequence ID" value="BAC24297.1"/>
    <property type="molecule type" value="Genomic_DNA"/>
</dbReference>
<dbReference type="SMR" id="Q8D350"/>
<dbReference type="STRING" id="36870.gene:10368639"/>
<dbReference type="KEGG" id="wbr:cyoE"/>
<dbReference type="eggNOG" id="COG0109">
    <property type="taxonomic scope" value="Bacteria"/>
</dbReference>
<dbReference type="HOGENOM" id="CLU_029631_0_0_6"/>
<dbReference type="OrthoDB" id="9814417at2"/>
<dbReference type="UniPathway" id="UPA00834">
    <property type="reaction ID" value="UER00712"/>
</dbReference>
<dbReference type="Proteomes" id="UP000000562">
    <property type="component" value="Chromosome"/>
</dbReference>
<dbReference type="GO" id="GO:0005886">
    <property type="term" value="C:plasma membrane"/>
    <property type="evidence" value="ECO:0007669"/>
    <property type="project" value="UniProtKB-SubCell"/>
</dbReference>
<dbReference type="GO" id="GO:0008495">
    <property type="term" value="F:protoheme IX farnesyltransferase activity"/>
    <property type="evidence" value="ECO:0007669"/>
    <property type="project" value="UniProtKB-UniRule"/>
</dbReference>
<dbReference type="GO" id="GO:0048034">
    <property type="term" value="P:heme O biosynthetic process"/>
    <property type="evidence" value="ECO:0007669"/>
    <property type="project" value="UniProtKB-UniRule"/>
</dbReference>
<dbReference type="CDD" id="cd13957">
    <property type="entry name" value="PT_UbiA_Cox10"/>
    <property type="match status" value="1"/>
</dbReference>
<dbReference type="FunFam" id="1.10.357.140:FF:000001">
    <property type="entry name" value="Protoheme IX farnesyltransferase"/>
    <property type="match status" value="1"/>
</dbReference>
<dbReference type="Gene3D" id="1.10.357.140">
    <property type="entry name" value="UbiA prenyltransferase"/>
    <property type="match status" value="1"/>
</dbReference>
<dbReference type="HAMAP" id="MF_00154">
    <property type="entry name" value="CyoE_CtaB"/>
    <property type="match status" value="1"/>
</dbReference>
<dbReference type="InterPro" id="IPR006369">
    <property type="entry name" value="Protohaem_IX_farnesylTrfase"/>
</dbReference>
<dbReference type="InterPro" id="IPR000537">
    <property type="entry name" value="UbiA_prenyltransferase"/>
</dbReference>
<dbReference type="InterPro" id="IPR030470">
    <property type="entry name" value="UbiA_prenylTrfase_CS"/>
</dbReference>
<dbReference type="InterPro" id="IPR044878">
    <property type="entry name" value="UbiA_sf"/>
</dbReference>
<dbReference type="NCBIfam" id="TIGR01473">
    <property type="entry name" value="cyoE_ctaB"/>
    <property type="match status" value="1"/>
</dbReference>
<dbReference type="NCBIfam" id="NF003348">
    <property type="entry name" value="PRK04375.1-1"/>
    <property type="match status" value="1"/>
</dbReference>
<dbReference type="PANTHER" id="PTHR43448">
    <property type="entry name" value="PROTOHEME IX FARNESYLTRANSFERASE, MITOCHONDRIAL"/>
    <property type="match status" value="1"/>
</dbReference>
<dbReference type="PANTHER" id="PTHR43448:SF2">
    <property type="entry name" value="PROTOHEME IX FARNESYLTRANSFERASE, MITOCHONDRIAL"/>
    <property type="match status" value="1"/>
</dbReference>
<dbReference type="Pfam" id="PF01040">
    <property type="entry name" value="UbiA"/>
    <property type="match status" value="1"/>
</dbReference>
<dbReference type="PROSITE" id="PS00943">
    <property type="entry name" value="UBIA"/>
    <property type="match status" value="1"/>
</dbReference>
<comment type="function">
    <text evidence="1">Converts heme B (protoheme IX) to heme O by substitution of the vinyl group on carbon 2 of heme B porphyrin ring with a hydroxyethyl farnesyl side group.</text>
</comment>
<comment type="catalytic activity">
    <reaction evidence="1">
        <text>heme b + (2E,6E)-farnesyl diphosphate + H2O = Fe(II)-heme o + diphosphate</text>
        <dbReference type="Rhea" id="RHEA:28070"/>
        <dbReference type="ChEBI" id="CHEBI:15377"/>
        <dbReference type="ChEBI" id="CHEBI:33019"/>
        <dbReference type="ChEBI" id="CHEBI:60344"/>
        <dbReference type="ChEBI" id="CHEBI:60530"/>
        <dbReference type="ChEBI" id="CHEBI:175763"/>
        <dbReference type="EC" id="2.5.1.141"/>
    </reaction>
</comment>
<comment type="pathway">
    <text evidence="1">Porphyrin-containing compound metabolism; heme O biosynthesis; heme O from protoheme: step 1/1.</text>
</comment>
<comment type="subcellular location">
    <subcellularLocation>
        <location evidence="1">Cell membrane</location>
        <topology evidence="1">Multi-pass membrane protein</topology>
    </subcellularLocation>
</comment>
<comment type="miscellaneous">
    <text evidence="1">Carbon 2 of the heme B porphyrin ring is defined according to the Fischer nomenclature.</text>
</comment>
<comment type="similarity">
    <text evidence="1">Belongs to the UbiA prenyltransferase family. Protoheme IX farnesyltransferase subfamily.</text>
</comment>
<protein>
    <recommendedName>
        <fullName evidence="1">Protoheme IX farnesyltransferase</fullName>
        <ecNumber evidence="1">2.5.1.141</ecNumber>
    </recommendedName>
    <alternativeName>
        <fullName evidence="1">Heme B farnesyltransferase</fullName>
    </alternativeName>
    <alternativeName>
        <fullName evidence="1">Heme O synthase</fullName>
    </alternativeName>
</protein>
<gene>
    <name evidence="1" type="primary">cyoE</name>
    <name type="ordered locus">WIGBR1510</name>
</gene>
<accession>Q8D350</accession>
<organism>
    <name type="scientific">Wigglesworthia glossinidia brevipalpis</name>
    <dbReference type="NCBI Taxonomy" id="36870"/>
    <lineage>
        <taxon>Bacteria</taxon>
        <taxon>Pseudomonadati</taxon>
        <taxon>Pseudomonadota</taxon>
        <taxon>Gammaproteobacteria</taxon>
        <taxon>Enterobacterales</taxon>
        <taxon>Erwiniaceae</taxon>
        <taxon>Wigglesworthia</taxon>
    </lineage>
</organism>
<keyword id="KW-1003">Cell membrane</keyword>
<keyword id="KW-0350">Heme biosynthesis</keyword>
<keyword id="KW-0472">Membrane</keyword>
<keyword id="KW-1185">Reference proteome</keyword>
<keyword id="KW-0808">Transferase</keyword>
<keyword id="KW-0812">Transmembrane</keyword>
<keyword id="KW-1133">Transmembrane helix</keyword>
<evidence type="ECO:0000255" key="1">
    <source>
        <dbReference type="HAMAP-Rule" id="MF_00154"/>
    </source>
</evidence>
<feature type="chain" id="PRO_0000326968" description="Protoheme IX farnesyltransferase">
    <location>
        <begin position="1"/>
        <end position="288"/>
    </location>
</feature>
<feature type="transmembrane region" description="Helical" evidence="1">
    <location>
        <begin position="8"/>
        <end position="28"/>
    </location>
</feature>
<feature type="transmembrane region" description="Helical" evidence="1">
    <location>
        <begin position="35"/>
        <end position="55"/>
    </location>
</feature>
<feature type="transmembrane region" description="Helical" evidence="1">
    <location>
        <begin position="75"/>
        <end position="95"/>
    </location>
</feature>
<feature type="transmembrane region" description="Helical" evidence="1">
    <location>
        <begin position="105"/>
        <end position="125"/>
    </location>
</feature>
<feature type="transmembrane region" description="Helical" evidence="1">
    <location>
        <begin position="130"/>
        <end position="150"/>
    </location>
</feature>
<feature type="transmembrane region" description="Helical" evidence="1">
    <location>
        <begin position="161"/>
        <end position="181"/>
    </location>
</feature>
<feature type="transmembrane region" description="Helical" evidence="1">
    <location>
        <begin position="205"/>
        <end position="225"/>
    </location>
</feature>
<feature type="transmembrane region" description="Helical" evidence="1">
    <location>
        <begin position="230"/>
        <end position="250"/>
    </location>
</feature>
<feature type="transmembrane region" description="Helical" evidence="1">
    <location>
        <begin position="265"/>
        <end position="285"/>
    </location>
</feature>
<sequence length="288" mass="32581">MIIKFIQIIKPGIIFGNIISTIGGFLLASQGDINVNLFIFTISATAILIASASIFNNCIDKDIDIKMQRTKNRAIAIGLISSNIAYIYALILLILSFLLFLKTNFLTIFISMLGFFIYVFIYSLLMKRKSVYSTIIGSLSGATPPIIGYCSVKEHFDIGAFILLCIFSFWQIPHSYAIGLVRYNDYKIASIPIFPIKKGSFKTKINIIIYIIAFFISTIMLFFAGYTGNNYLFFSIFFGLIWIFIAIKGFKSSEENFNIIWGRKIFLFSIVIITAISILISIDYKKNI</sequence>
<name>CYOE_WIGBR</name>
<proteinExistence type="inferred from homology"/>
<reference key="1">
    <citation type="journal article" date="2002" name="Nat. Genet.">
        <title>Genome sequence of the endocellular obligate symbiont of tsetse flies, Wigglesworthia glossinidia.</title>
        <authorList>
            <person name="Akman L."/>
            <person name="Yamashita A."/>
            <person name="Watanabe H."/>
            <person name="Oshima K."/>
            <person name="Shiba T."/>
            <person name="Hattori M."/>
            <person name="Aksoy S."/>
        </authorList>
    </citation>
    <scope>NUCLEOTIDE SEQUENCE [LARGE SCALE GENOMIC DNA]</scope>
</reference>